<accession>M0ZYF3</accession>
<feature type="transit peptide" description="Mitochondrion" evidence="2">
    <location>
        <begin position="1"/>
        <end position="41"/>
    </location>
</feature>
<feature type="chain" id="PRO_0000422941" description="Internal alternative NAD(P)H-ubiquinone oxidoreductase A1, mitochondrial">
    <location>
        <begin position="42"/>
        <end position="495"/>
    </location>
</feature>
<feature type="short sequence motif" description="Microbody targeting signal" evidence="1">
    <location>
        <begin position="486"/>
        <end position="495"/>
    </location>
</feature>
<feature type="binding site" evidence="1">
    <location>
        <begin position="61"/>
        <end position="91"/>
    </location>
    <ligand>
        <name>FAD</name>
        <dbReference type="ChEBI" id="CHEBI:57692"/>
    </ligand>
</feature>
<feature type="binding site" evidence="1">
    <location>
        <begin position="228"/>
        <end position="264"/>
    </location>
    <ligand>
        <name>NAD(+)</name>
        <dbReference type="ChEBI" id="CHEBI:57540"/>
    </ligand>
</feature>
<reference key="1">
    <citation type="journal article" date="2011" name="Nature">
        <title>Genome sequence and analysis of the tuber crop potato.</title>
        <authorList>
            <consortium name="The Potato Genome Sequencing Consortium"/>
        </authorList>
    </citation>
    <scope>NUCLEOTIDE SEQUENCE [LARGE SCALE GENOMIC DNA]</scope>
    <source>
        <strain>cv. DM1-3 516 R44</strain>
    </source>
</reference>
<gene>
    <name type="primary">NDA1</name>
    <name type="ORF">PGSC0003DMG400004168</name>
</gene>
<proteinExistence type="inferred from homology"/>
<organism>
    <name type="scientific">Solanum tuberosum</name>
    <name type="common">Potato</name>
    <dbReference type="NCBI Taxonomy" id="4113"/>
    <lineage>
        <taxon>Eukaryota</taxon>
        <taxon>Viridiplantae</taxon>
        <taxon>Streptophyta</taxon>
        <taxon>Embryophyta</taxon>
        <taxon>Tracheophyta</taxon>
        <taxon>Spermatophyta</taxon>
        <taxon>Magnoliopsida</taxon>
        <taxon>eudicotyledons</taxon>
        <taxon>Gunneridae</taxon>
        <taxon>Pentapetalae</taxon>
        <taxon>asterids</taxon>
        <taxon>lamiids</taxon>
        <taxon>Solanales</taxon>
        <taxon>Solanaceae</taxon>
        <taxon>Solanoideae</taxon>
        <taxon>Solaneae</taxon>
        <taxon>Solanum</taxon>
    </lineage>
</organism>
<dbReference type="EC" id="1.6.5.9"/>
<dbReference type="EMBL" id="AEWC01009701">
    <property type="status" value="NOT_ANNOTATED_CDS"/>
    <property type="molecule type" value="Genomic_DNA"/>
</dbReference>
<dbReference type="SMR" id="M0ZYF3"/>
<dbReference type="FunCoup" id="M0ZYF3">
    <property type="interactions" value="243"/>
</dbReference>
<dbReference type="STRING" id="4113.M0ZYF3"/>
<dbReference type="PaxDb" id="4113-PGSC0003DMT400010678"/>
<dbReference type="EnsemblPlants" id="PGSC0003DMT400010678">
    <property type="protein sequence ID" value="PGSC0003DMT400010678"/>
    <property type="gene ID" value="PGSC0003DMG400004168"/>
</dbReference>
<dbReference type="EnsemblPlants" id="RHC06H1G0405.2.1">
    <property type="protein sequence ID" value="RHC06H1G0405.2.1"/>
    <property type="gene ID" value="RHC06H1G0405.2"/>
</dbReference>
<dbReference type="Gramene" id="PGSC0003DMT400010678">
    <property type="protein sequence ID" value="PGSC0003DMT400010678"/>
    <property type="gene ID" value="PGSC0003DMG400004168"/>
</dbReference>
<dbReference type="Gramene" id="RHC06H1G0405.2.1">
    <property type="protein sequence ID" value="RHC06H1G0405.2.1"/>
    <property type="gene ID" value="RHC06H1G0405.2"/>
</dbReference>
<dbReference type="eggNOG" id="KOG2495">
    <property type="taxonomic scope" value="Eukaryota"/>
</dbReference>
<dbReference type="HOGENOM" id="CLU_021377_1_3_1"/>
<dbReference type="InParanoid" id="M0ZYF3"/>
<dbReference type="OMA" id="MQGGLHV"/>
<dbReference type="OrthoDB" id="3244603at2759"/>
<dbReference type="Proteomes" id="UP000011115">
    <property type="component" value="Unassembled WGS sequence"/>
</dbReference>
<dbReference type="ExpressionAtlas" id="M0ZYF3">
    <property type="expression patterns" value="baseline"/>
</dbReference>
<dbReference type="GO" id="GO:0005743">
    <property type="term" value="C:mitochondrial inner membrane"/>
    <property type="evidence" value="ECO:0007669"/>
    <property type="project" value="UniProtKB-SubCell"/>
</dbReference>
<dbReference type="GO" id="GO:0005759">
    <property type="term" value="C:mitochondrial matrix"/>
    <property type="evidence" value="ECO:0000250"/>
    <property type="project" value="UniProtKB"/>
</dbReference>
<dbReference type="GO" id="GO:0005739">
    <property type="term" value="C:mitochondrion"/>
    <property type="evidence" value="ECO:0000318"/>
    <property type="project" value="GO_Central"/>
</dbReference>
<dbReference type="GO" id="GO:0005777">
    <property type="term" value="C:peroxisome"/>
    <property type="evidence" value="ECO:0007669"/>
    <property type="project" value="UniProtKB-SubCell"/>
</dbReference>
<dbReference type="GO" id="GO:0050136">
    <property type="term" value="F:NADH:ubiquinone reductase (non-electrogenic) activity"/>
    <property type="evidence" value="ECO:0007669"/>
    <property type="project" value="UniProtKB-EC"/>
</dbReference>
<dbReference type="GO" id="GO:0003959">
    <property type="term" value="F:NADPH dehydrogenase activity"/>
    <property type="evidence" value="ECO:0000250"/>
    <property type="project" value="UniProtKB"/>
</dbReference>
<dbReference type="GO" id="GO:0016491">
    <property type="term" value="F:oxidoreductase activity"/>
    <property type="evidence" value="ECO:0000250"/>
    <property type="project" value="UniProtKB"/>
</dbReference>
<dbReference type="FunFam" id="3.50.50.100:FF:000009">
    <property type="entry name" value="Internal alternative NAD(P)H-ubiquinone oxidoreductase A1, mitochondrial"/>
    <property type="match status" value="1"/>
</dbReference>
<dbReference type="Gene3D" id="3.50.50.100">
    <property type="match status" value="1"/>
</dbReference>
<dbReference type="InterPro" id="IPR036188">
    <property type="entry name" value="FAD/NAD-bd_sf"/>
</dbReference>
<dbReference type="InterPro" id="IPR023753">
    <property type="entry name" value="FAD/NAD-binding_dom"/>
</dbReference>
<dbReference type="InterPro" id="IPR045024">
    <property type="entry name" value="NDH-2"/>
</dbReference>
<dbReference type="InterPro" id="IPR054585">
    <property type="entry name" value="NDH2-like_C"/>
</dbReference>
<dbReference type="PANTHER" id="PTHR43706">
    <property type="entry name" value="NADH DEHYDROGENASE"/>
    <property type="match status" value="1"/>
</dbReference>
<dbReference type="PANTHER" id="PTHR43706:SF13">
    <property type="entry name" value="NADH DEHYDROGENASE-RELATED"/>
    <property type="match status" value="1"/>
</dbReference>
<dbReference type="Pfam" id="PF22366">
    <property type="entry name" value="NDH2_C"/>
    <property type="match status" value="1"/>
</dbReference>
<dbReference type="Pfam" id="PF07992">
    <property type="entry name" value="Pyr_redox_2"/>
    <property type="match status" value="1"/>
</dbReference>
<dbReference type="PRINTS" id="PR00368">
    <property type="entry name" value="FADPNR"/>
</dbReference>
<dbReference type="SUPFAM" id="SSF51905">
    <property type="entry name" value="FAD/NAD(P)-binding domain"/>
    <property type="match status" value="2"/>
</dbReference>
<evidence type="ECO:0000250" key="1"/>
<evidence type="ECO:0000255" key="2"/>
<evidence type="ECO:0000305" key="3"/>
<protein>
    <recommendedName>
        <fullName>Internal alternative NAD(P)H-ubiquinone oxidoreductase A1, mitochondrial</fullName>
        <ecNumber>1.6.5.9</ecNumber>
    </recommendedName>
    <alternativeName>
        <fullName>Internal alternative NADH dehydrogenase NDA1</fullName>
    </alternativeName>
    <alternativeName>
        <fullName>Internal non-phosphorylating NAD(P)H dehydrogenase 1</fullName>
        <shortName>StNDI1</shortName>
    </alternativeName>
    <alternativeName>
        <fullName>NADH:ubiquinone reductase (non-electrogenic) NDA1</fullName>
    </alternativeName>
</protein>
<sequence length="495" mass="54911">MPWFKNLIKISKTITNQSSSYKSITPLASPLLAQFLQFTKQYSTNDHVVGLEATKSDQKPRIVVLGSGWAGCRLMKDIDTNIYDVVCVSPRNHMVFTPLLASTCVGTLEFRSVAEPIGRIQPAVSTQPASYFFLANCNAIDFDNHMIQCQTVTEGVETLEPWKFNVSYDKLVIASGAHALTFGIKGVNEHATFLREVHHAQEIRRKLLLNLMLSDVPGVSEEEKRRLLHCVVVGGGPTGVEFSGELSDFILKDVHQRYAHVKDYIHVTLIEANEILSSFDDRLRVYATNQLTKSGVRLVRGLVQHVQPDKIILSDGTNVPYGLLVWSTGVGPSPFVNSLDIPKAKGRIGIDEWLRVPSVQDVYSIGDCSGFLESTGRQVLPALAQVAERQGKYLASLLNKVGKEGGGHANCAQNINLGDPFVYKHLGSMATIGRYKALVDLRESKEAKGVSLAGFTSFFVWRSAYLTRVVSWRNKIYVLINWLTTLVFGRDISRI</sequence>
<name>INDA1_SOLTU</name>
<comment type="function">
    <text evidence="1">Alternative NADH-ubiquinone oxidoreductase which catalyzes the oxidation of mitochondrial NADH does not translocate protons across the inner mitochondrial membrane.</text>
</comment>
<comment type="catalytic activity">
    <reaction>
        <text>a quinone + NADH + H(+) = a quinol + NAD(+)</text>
        <dbReference type="Rhea" id="RHEA:46160"/>
        <dbReference type="ChEBI" id="CHEBI:15378"/>
        <dbReference type="ChEBI" id="CHEBI:24646"/>
        <dbReference type="ChEBI" id="CHEBI:57540"/>
        <dbReference type="ChEBI" id="CHEBI:57945"/>
        <dbReference type="ChEBI" id="CHEBI:132124"/>
        <dbReference type="EC" id="1.6.5.9"/>
    </reaction>
</comment>
<comment type="catalytic activity">
    <reaction>
        <text>a ubiquinone + NADH + H(+) = a ubiquinol + NAD(+)</text>
        <dbReference type="Rhea" id="RHEA:23152"/>
        <dbReference type="Rhea" id="RHEA-COMP:9565"/>
        <dbReference type="Rhea" id="RHEA-COMP:9566"/>
        <dbReference type="ChEBI" id="CHEBI:15378"/>
        <dbReference type="ChEBI" id="CHEBI:16389"/>
        <dbReference type="ChEBI" id="CHEBI:17976"/>
        <dbReference type="ChEBI" id="CHEBI:57540"/>
        <dbReference type="ChEBI" id="CHEBI:57945"/>
    </reaction>
</comment>
<comment type="cofactor">
    <cofactor evidence="1">
        <name>FAD</name>
        <dbReference type="ChEBI" id="CHEBI:57692"/>
    </cofactor>
    <text evidence="1">Binds 1 FAD per subunit.</text>
</comment>
<comment type="subcellular location">
    <subcellularLocation>
        <location>Mitochondrion inner membrane</location>
        <topology>Peripheral membrane protein</topology>
        <orientation>Matrix side</orientation>
    </subcellularLocation>
    <subcellularLocation>
        <location>Peroxisome</location>
    </subcellularLocation>
</comment>
<comment type="similarity">
    <text evidence="3">Belongs to the NADH dehydrogenase family.</text>
</comment>
<keyword id="KW-0274">FAD</keyword>
<keyword id="KW-0285">Flavoprotein</keyword>
<keyword id="KW-0472">Membrane</keyword>
<keyword id="KW-0496">Mitochondrion</keyword>
<keyword id="KW-0999">Mitochondrion inner membrane</keyword>
<keyword id="KW-0520">NAD</keyword>
<keyword id="KW-0521">NADP</keyword>
<keyword id="KW-0560">Oxidoreductase</keyword>
<keyword id="KW-0576">Peroxisome</keyword>
<keyword id="KW-1185">Reference proteome</keyword>
<keyword id="KW-0809">Transit peptide</keyword>